<accession>P52788</accession>
<accession>A6NHA7</accession>
<accession>A6NI34</accession>
<accession>B2R9M0</accession>
<accession>O00544</accession>
<accession>Q9UQS1</accession>
<proteinExistence type="evidence at protein level"/>
<evidence type="ECO:0000255" key="1">
    <source>
        <dbReference type="PROSITE-ProRule" id="PRU00354"/>
    </source>
</evidence>
<evidence type="ECO:0000269" key="2">
    <source>
    </source>
</evidence>
<evidence type="ECO:0000269" key="3">
    <source>
    </source>
</evidence>
<evidence type="ECO:0000269" key="4">
    <source>
    </source>
</evidence>
<evidence type="ECO:0000269" key="5">
    <source>
    </source>
</evidence>
<evidence type="ECO:0000269" key="6">
    <source>
    </source>
</evidence>
<evidence type="ECO:0000269" key="7">
    <source>
    </source>
</evidence>
<evidence type="ECO:0000269" key="8">
    <source>
    </source>
</evidence>
<evidence type="ECO:0000269" key="9">
    <source>
    </source>
</evidence>
<evidence type="ECO:0000303" key="10">
    <source>
    </source>
</evidence>
<evidence type="ECO:0000303" key="11">
    <source>
    </source>
</evidence>
<evidence type="ECO:0000305" key="12"/>
<evidence type="ECO:0000312" key="13">
    <source>
        <dbReference type="HGNC" id="HGNC:11123"/>
    </source>
</evidence>
<evidence type="ECO:0007744" key="14">
    <source>
    </source>
</evidence>
<evidence type="ECO:0007744" key="15">
    <source>
    </source>
</evidence>
<evidence type="ECO:0007829" key="16">
    <source>
        <dbReference type="PDB" id="3C6K"/>
    </source>
</evidence>
<evidence type="ECO:0007829" key="17">
    <source>
        <dbReference type="PDB" id="3C6M"/>
    </source>
</evidence>
<gene>
    <name evidence="10 13" type="primary">SMS</name>
</gene>
<organism>
    <name type="scientific">Homo sapiens</name>
    <name type="common">Human</name>
    <dbReference type="NCBI Taxonomy" id="9606"/>
    <lineage>
        <taxon>Eukaryota</taxon>
        <taxon>Metazoa</taxon>
        <taxon>Chordata</taxon>
        <taxon>Craniata</taxon>
        <taxon>Vertebrata</taxon>
        <taxon>Euteleostomi</taxon>
        <taxon>Mammalia</taxon>
        <taxon>Eutheria</taxon>
        <taxon>Euarchontoglires</taxon>
        <taxon>Primates</taxon>
        <taxon>Haplorrhini</taxon>
        <taxon>Catarrhini</taxon>
        <taxon>Hominidae</taxon>
        <taxon>Homo</taxon>
    </lineage>
</organism>
<sequence length="366" mass="41268">MAAARHSTLDFMLGAKADGETILKGLQSIFQEQGMAESVHTWQDHGYLATYTNKNGSFANLRIYPHGLVLLDLQSYDGDAQGKEEIDSILNKVEERMKELSQDSTGRVKRLPPIVRGGAIDRYWPTADGRLVEYDIDEVVYDEDSPYQNIKILHSKQFGNILILSGDVNLAESDLAYTRAIMGSGKEDYTGKDVLILGGGDGGILCEIVKLKPKMVTMVEIDQMVIDGCKKYMRKTCGDVLDNLKGDCYQVLIEDCIPVLKRYAKEGREFDYVINDLTAVPISTSPEEDSTWEFLRLILDLSMKVLKQDGKYFTQGNCVNLTEALSLYEEQLGRLYCPVEFSKEIVCVPSYLELWVFYTVWKKAKP</sequence>
<reference key="1">
    <citation type="journal article" date="1995" name="DNA Cell Biol.">
        <title>Molecular cloning of a cDNA encoding human spermine synthase.</title>
        <authorList>
            <person name="Korhonen V.-P."/>
            <person name="Halmekytoe M."/>
            <person name="Kauppinen L."/>
            <person name="Myoehaenen S."/>
            <person name="Wahlfors J."/>
            <person name="Keinaenen T."/>
            <person name="Hyvoenen T."/>
            <person name="Alhonen L."/>
            <person name="Eloranta T."/>
            <person name="Jaenne J."/>
        </authorList>
    </citation>
    <scope>NUCLEOTIDE SEQUENCE [MRNA] (ISOFORM 1)</scope>
</reference>
<reference key="2">
    <citation type="journal article" date="1997" name="Genomics">
        <title>Sequence analysis of 139 kb in Xp22.1 containing spermine synthase and the 5' region of PEX.</title>
        <authorList>
            <person name="Grieff M."/>
            <person name="Whyte M.P."/>
            <person name="Thakker R.V."/>
            <person name="Mazzarella R."/>
        </authorList>
    </citation>
    <scope>NUCLEOTIDE SEQUENCE [MRNA] (ISOFORM 1)</scope>
    <source>
        <tissue>Colon</tissue>
    </source>
</reference>
<reference key="3">
    <citation type="journal article" date="2004" name="Nat. Genet.">
        <title>Complete sequencing and characterization of 21,243 full-length human cDNAs.</title>
        <authorList>
            <person name="Ota T."/>
            <person name="Suzuki Y."/>
            <person name="Nishikawa T."/>
            <person name="Otsuki T."/>
            <person name="Sugiyama T."/>
            <person name="Irie R."/>
            <person name="Wakamatsu A."/>
            <person name="Hayashi K."/>
            <person name="Sato H."/>
            <person name="Nagai K."/>
            <person name="Kimura K."/>
            <person name="Makita H."/>
            <person name="Sekine M."/>
            <person name="Obayashi M."/>
            <person name="Nishi T."/>
            <person name="Shibahara T."/>
            <person name="Tanaka T."/>
            <person name="Ishii S."/>
            <person name="Yamamoto J."/>
            <person name="Saito K."/>
            <person name="Kawai Y."/>
            <person name="Isono Y."/>
            <person name="Nakamura Y."/>
            <person name="Nagahari K."/>
            <person name="Murakami K."/>
            <person name="Yasuda T."/>
            <person name="Iwayanagi T."/>
            <person name="Wagatsuma M."/>
            <person name="Shiratori A."/>
            <person name="Sudo H."/>
            <person name="Hosoiri T."/>
            <person name="Kaku Y."/>
            <person name="Kodaira H."/>
            <person name="Kondo H."/>
            <person name="Sugawara M."/>
            <person name="Takahashi M."/>
            <person name="Kanda K."/>
            <person name="Yokoi T."/>
            <person name="Furuya T."/>
            <person name="Kikkawa E."/>
            <person name="Omura Y."/>
            <person name="Abe K."/>
            <person name="Kamihara K."/>
            <person name="Katsuta N."/>
            <person name="Sato K."/>
            <person name="Tanikawa M."/>
            <person name="Yamazaki M."/>
            <person name="Ninomiya K."/>
            <person name="Ishibashi T."/>
            <person name="Yamashita H."/>
            <person name="Murakawa K."/>
            <person name="Fujimori K."/>
            <person name="Tanai H."/>
            <person name="Kimata M."/>
            <person name="Watanabe M."/>
            <person name="Hiraoka S."/>
            <person name="Chiba Y."/>
            <person name="Ishida S."/>
            <person name="Ono Y."/>
            <person name="Takiguchi S."/>
            <person name="Watanabe S."/>
            <person name="Yosida M."/>
            <person name="Hotuta T."/>
            <person name="Kusano J."/>
            <person name="Kanehori K."/>
            <person name="Takahashi-Fujii A."/>
            <person name="Hara H."/>
            <person name="Tanase T.-O."/>
            <person name="Nomura Y."/>
            <person name="Togiya S."/>
            <person name="Komai F."/>
            <person name="Hara R."/>
            <person name="Takeuchi K."/>
            <person name="Arita M."/>
            <person name="Imose N."/>
            <person name="Musashino K."/>
            <person name="Yuuki H."/>
            <person name="Oshima A."/>
            <person name="Sasaki N."/>
            <person name="Aotsuka S."/>
            <person name="Yoshikawa Y."/>
            <person name="Matsunawa H."/>
            <person name="Ichihara T."/>
            <person name="Shiohata N."/>
            <person name="Sano S."/>
            <person name="Moriya S."/>
            <person name="Momiyama H."/>
            <person name="Satoh N."/>
            <person name="Takami S."/>
            <person name="Terashima Y."/>
            <person name="Suzuki O."/>
            <person name="Nakagawa S."/>
            <person name="Senoh A."/>
            <person name="Mizoguchi H."/>
            <person name="Goto Y."/>
            <person name="Shimizu F."/>
            <person name="Wakebe H."/>
            <person name="Hishigaki H."/>
            <person name="Watanabe T."/>
            <person name="Sugiyama A."/>
            <person name="Takemoto M."/>
            <person name="Kawakami B."/>
            <person name="Yamazaki M."/>
            <person name="Watanabe K."/>
            <person name="Kumagai A."/>
            <person name="Itakura S."/>
            <person name="Fukuzumi Y."/>
            <person name="Fujimori Y."/>
            <person name="Komiyama M."/>
            <person name="Tashiro H."/>
            <person name="Tanigami A."/>
            <person name="Fujiwara T."/>
            <person name="Ono T."/>
            <person name="Yamada K."/>
            <person name="Fujii Y."/>
            <person name="Ozaki K."/>
            <person name="Hirao M."/>
            <person name="Ohmori Y."/>
            <person name="Kawabata A."/>
            <person name="Hikiji T."/>
            <person name="Kobatake N."/>
            <person name="Inagaki H."/>
            <person name="Ikema Y."/>
            <person name="Okamoto S."/>
            <person name="Okitani R."/>
            <person name="Kawakami T."/>
            <person name="Noguchi S."/>
            <person name="Itoh T."/>
            <person name="Shigeta K."/>
            <person name="Senba T."/>
            <person name="Matsumura K."/>
            <person name="Nakajima Y."/>
            <person name="Mizuno T."/>
            <person name="Morinaga M."/>
            <person name="Sasaki M."/>
            <person name="Togashi T."/>
            <person name="Oyama M."/>
            <person name="Hata H."/>
            <person name="Watanabe M."/>
            <person name="Komatsu T."/>
            <person name="Mizushima-Sugano J."/>
            <person name="Satoh T."/>
            <person name="Shirai Y."/>
            <person name="Takahashi Y."/>
            <person name="Nakagawa K."/>
            <person name="Okumura K."/>
            <person name="Nagase T."/>
            <person name="Nomura N."/>
            <person name="Kikuchi H."/>
            <person name="Masuho Y."/>
            <person name="Yamashita R."/>
            <person name="Nakai K."/>
            <person name="Yada T."/>
            <person name="Nakamura Y."/>
            <person name="Ohara O."/>
            <person name="Isogai T."/>
            <person name="Sugano S."/>
        </authorList>
    </citation>
    <scope>NUCLEOTIDE SEQUENCE [LARGE SCALE MRNA] (ISOFORM 1)</scope>
</reference>
<reference key="4">
    <citation type="journal article" date="2005" name="Nature">
        <title>The DNA sequence of the human X chromosome.</title>
        <authorList>
            <person name="Ross M.T."/>
            <person name="Grafham D.V."/>
            <person name="Coffey A.J."/>
            <person name="Scherer S."/>
            <person name="McLay K."/>
            <person name="Muzny D."/>
            <person name="Platzer M."/>
            <person name="Howell G.R."/>
            <person name="Burrows C."/>
            <person name="Bird C.P."/>
            <person name="Frankish A."/>
            <person name="Lovell F.L."/>
            <person name="Howe K.L."/>
            <person name="Ashurst J.L."/>
            <person name="Fulton R.S."/>
            <person name="Sudbrak R."/>
            <person name="Wen G."/>
            <person name="Jones M.C."/>
            <person name="Hurles M.E."/>
            <person name="Andrews T.D."/>
            <person name="Scott C.E."/>
            <person name="Searle S."/>
            <person name="Ramser J."/>
            <person name="Whittaker A."/>
            <person name="Deadman R."/>
            <person name="Carter N.P."/>
            <person name="Hunt S.E."/>
            <person name="Chen R."/>
            <person name="Cree A."/>
            <person name="Gunaratne P."/>
            <person name="Havlak P."/>
            <person name="Hodgson A."/>
            <person name="Metzker M.L."/>
            <person name="Richards S."/>
            <person name="Scott G."/>
            <person name="Steffen D."/>
            <person name="Sodergren E."/>
            <person name="Wheeler D.A."/>
            <person name="Worley K.C."/>
            <person name="Ainscough R."/>
            <person name="Ambrose K.D."/>
            <person name="Ansari-Lari M.A."/>
            <person name="Aradhya S."/>
            <person name="Ashwell R.I."/>
            <person name="Babbage A.K."/>
            <person name="Bagguley C.L."/>
            <person name="Ballabio A."/>
            <person name="Banerjee R."/>
            <person name="Barker G.E."/>
            <person name="Barlow K.F."/>
            <person name="Barrett I.P."/>
            <person name="Bates K.N."/>
            <person name="Beare D.M."/>
            <person name="Beasley H."/>
            <person name="Beasley O."/>
            <person name="Beck A."/>
            <person name="Bethel G."/>
            <person name="Blechschmidt K."/>
            <person name="Brady N."/>
            <person name="Bray-Allen S."/>
            <person name="Bridgeman A.M."/>
            <person name="Brown A.J."/>
            <person name="Brown M.J."/>
            <person name="Bonnin D."/>
            <person name="Bruford E.A."/>
            <person name="Buhay C."/>
            <person name="Burch P."/>
            <person name="Burford D."/>
            <person name="Burgess J."/>
            <person name="Burrill W."/>
            <person name="Burton J."/>
            <person name="Bye J.M."/>
            <person name="Carder C."/>
            <person name="Carrel L."/>
            <person name="Chako J."/>
            <person name="Chapman J.C."/>
            <person name="Chavez D."/>
            <person name="Chen E."/>
            <person name="Chen G."/>
            <person name="Chen Y."/>
            <person name="Chen Z."/>
            <person name="Chinault C."/>
            <person name="Ciccodicola A."/>
            <person name="Clark S.Y."/>
            <person name="Clarke G."/>
            <person name="Clee C.M."/>
            <person name="Clegg S."/>
            <person name="Clerc-Blankenburg K."/>
            <person name="Clifford K."/>
            <person name="Cobley V."/>
            <person name="Cole C.G."/>
            <person name="Conquer J.S."/>
            <person name="Corby N."/>
            <person name="Connor R.E."/>
            <person name="David R."/>
            <person name="Davies J."/>
            <person name="Davis C."/>
            <person name="Davis J."/>
            <person name="Delgado O."/>
            <person name="Deshazo D."/>
            <person name="Dhami P."/>
            <person name="Ding Y."/>
            <person name="Dinh H."/>
            <person name="Dodsworth S."/>
            <person name="Draper H."/>
            <person name="Dugan-Rocha S."/>
            <person name="Dunham A."/>
            <person name="Dunn M."/>
            <person name="Durbin K.J."/>
            <person name="Dutta I."/>
            <person name="Eades T."/>
            <person name="Ellwood M."/>
            <person name="Emery-Cohen A."/>
            <person name="Errington H."/>
            <person name="Evans K.L."/>
            <person name="Faulkner L."/>
            <person name="Francis F."/>
            <person name="Frankland J."/>
            <person name="Fraser A.E."/>
            <person name="Galgoczy P."/>
            <person name="Gilbert J."/>
            <person name="Gill R."/>
            <person name="Gloeckner G."/>
            <person name="Gregory S.G."/>
            <person name="Gribble S."/>
            <person name="Griffiths C."/>
            <person name="Grocock R."/>
            <person name="Gu Y."/>
            <person name="Gwilliam R."/>
            <person name="Hamilton C."/>
            <person name="Hart E.A."/>
            <person name="Hawes A."/>
            <person name="Heath P.D."/>
            <person name="Heitmann K."/>
            <person name="Hennig S."/>
            <person name="Hernandez J."/>
            <person name="Hinzmann B."/>
            <person name="Ho S."/>
            <person name="Hoffs M."/>
            <person name="Howden P.J."/>
            <person name="Huckle E.J."/>
            <person name="Hume J."/>
            <person name="Hunt P.J."/>
            <person name="Hunt A.R."/>
            <person name="Isherwood J."/>
            <person name="Jacob L."/>
            <person name="Johnson D."/>
            <person name="Jones S."/>
            <person name="de Jong P.J."/>
            <person name="Joseph S.S."/>
            <person name="Keenan S."/>
            <person name="Kelly S."/>
            <person name="Kershaw J.K."/>
            <person name="Khan Z."/>
            <person name="Kioschis P."/>
            <person name="Klages S."/>
            <person name="Knights A.J."/>
            <person name="Kosiura A."/>
            <person name="Kovar-Smith C."/>
            <person name="Laird G.K."/>
            <person name="Langford C."/>
            <person name="Lawlor S."/>
            <person name="Leversha M."/>
            <person name="Lewis L."/>
            <person name="Liu W."/>
            <person name="Lloyd C."/>
            <person name="Lloyd D.M."/>
            <person name="Loulseged H."/>
            <person name="Loveland J.E."/>
            <person name="Lovell J.D."/>
            <person name="Lozado R."/>
            <person name="Lu J."/>
            <person name="Lyne R."/>
            <person name="Ma J."/>
            <person name="Maheshwari M."/>
            <person name="Matthews L.H."/>
            <person name="McDowall J."/>
            <person name="McLaren S."/>
            <person name="McMurray A."/>
            <person name="Meidl P."/>
            <person name="Meitinger T."/>
            <person name="Milne S."/>
            <person name="Miner G."/>
            <person name="Mistry S.L."/>
            <person name="Morgan M."/>
            <person name="Morris S."/>
            <person name="Mueller I."/>
            <person name="Mullikin J.C."/>
            <person name="Nguyen N."/>
            <person name="Nordsiek G."/>
            <person name="Nyakatura G."/>
            <person name="O'dell C.N."/>
            <person name="Okwuonu G."/>
            <person name="Palmer S."/>
            <person name="Pandian R."/>
            <person name="Parker D."/>
            <person name="Parrish J."/>
            <person name="Pasternak S."/>
            <person name="Patel D."/>
            <person name="Pearce A.V."/>
            <person name="Pearson D.M."/>
            <person name="Pelan S.E."/>
            <person name="Perez L."/>
            <person name="Porter K.M."/>
            <person name="Ramsey Y."/>
            <person name="Reichwald K."/>
            <person name="Rhodes S."/>
            <person name="Ridler K.A."/>
            <person name="Schlessinger D."/>
            <person name="Schueler M.G."/>
            <person name="Sehra H.K."/>
            <person name="Shaw-Smith C."/>
            <person name="Shen H."/>
            <person name="Sheridan E.M."/>
            <person name="Shownkeen R."/>
            <person name="Skuce C.D."/>
            <person name="Smith M.L."/>
            <person name="Sotheran E.C."/>
            <person name="Steingruber H.E."/>
            <person name="Steward C.A."/>
            <person name="Storey R."/>
            <person name="Swann R.M."/>
            <person name="Swarbreck D."/>
            <person name="Tabor P.E."/>
            <person name="Taudien S."/>
            <person name="Taylor T."/>
            <person name="Teague B."/>
            <person name="Thomas K."/>
            <person name="Thorpe A."/>
            <person name="Timms K."/>
            <person name="Tracey A."/>
            <person name="Trevanion S."/>
            <person name="Tromans A.C."/>
            <person name="d'Urso M."/>
            <person name="Verduzco D."/>
            <person name="Villasana D."/>
            <person name="Waldron L."/>
            <person name="Wall M."/>
            <person name="Wang Q."/>
            <person name="Warren J."/>
            <person name="Warry G.L."/>
            <person name="Wei X."/>
            <person name="West A."/>
            <person name="Whitehead S.L."/>
            <person name="Whiteley M.N."/>
            <person name="Wilkinson J.E."/>
            <person name="Willey D.L."/>
            <person name="Williams G."/>
            <person name="Williams L."/>
            <person name="Williamson A."/>
            <person name="Williamson H."/>
            <person name="Wilming L."/>
            <person name="Woodmansey R.L."/>
            <person name="Wray P.W."/>
            <person name="Yen J."/>
            <person name="Zhang J."/>
            <person name="Zhou J."/>
            <person name="Zoghbi H."/>
            <person name="Zorilla S."/>
            <person name="Buck D."/>
            <person name="Reinhardt R."/>
            <person name="Poustka A."/>
            <person name="Rosenthal A."/>
            <person name="Lehrach H."/>
            <person name="Meindl A."/>
            <person name="Minx P.J."/>
            <person name="Hillier L.W."/>
            <person name="Willard H.F."/>
            <person name="Wilson R.K."/>
            <person name="Waterston R.H."/>
            <person name="Rice C.M."/>
            <person name="Vaudin M."/>
            <person name="Coulson A."/>
            <person name="Nelson D.L."/>
            <person name="Weinstock G."/>
            <person name="Sulston J.E."/>
            <person name="Durbin R.M."/>
            <person name="Hubbard T."/>
            <person name="Gibbs R.A."/>
            <person name="Beck S."/>
            <person name="Rogers J."/>
            <person name="Bentley D.R."/>
        </authorList>
    </citation>
    <scope>NUCLEOTIDE SEQUENCE [LARGE SCALE GENOMIC DNA]</scope>
</reference>
<reference key="5">
    <citation type="submission" date="2005-07" db="EMBL/GenBank/DDBJ databases">
        <authorList>
            <person name="Mural R.J."/>
            <person name="Istrail S."/>
            <person name="Sutton G.G."/>
            <person name="Florea L."/>
            <person name="Halpern A.L."/>
            <person name="Mobarry C.M."/>
            <person name="Lippert R."/>
            <person name="Walenz B."/>
            <person name="Shatkay H."/>
            <person name="Dew I."/>
            <person name="Miller J.R."/>
            <person name="Flanigan M.J."/>
            <person name="Edwards N.J."/>
            <person name="Bolanos R."/>
            <person name="Fasulo D."/>
            <person name="Halldorsson B.V."/>
            <person name="Hannenhalli S."/>
            <person name="Turner R."/>
            <person name="Yooseph S."/>
            <person name="Lu F."/>
            <person name="Nusskern D.R."/>
            <person name="Shue B.C."/>
            <person name="Zheng X.H."/>
            <person name="Zhong F."/>
            <person name="Delcher A.L."/>
            <person name="Huson D.H."/>
            <person name="Kravitz S.A."/>
            <person name="Mouchard L."/>
            <person name="Reinert K."/>
            <person name="Remington K.A."/>
            <person name="Clark A.G."/>
            <person name="Waterman M.S."/>
            <person name="Eichler E.E."/>
            <person name="Adams M.D."/>
            <person name="Hunkapiller M.W."/>
            <person name="Myers E.W."/>
            <person name="Venter J.C."/>
        </authorList>
    </citation>
    <scope>NUCLEOTIDE SEQUENCE [LARGE SCALE GENOMIC DNA]</scope>
</reference>
<reference key="6">
    <citation type="journal article" date="2004" name="Genome Res.">
        <title>The status, quality, and expansion of the NIH full-length cDNA project: the Mammalian Gene Collection (MGC).</title>
        <authorList>
            <consortium name="The MGC Project Team"/>
        </authorList>
    </citation>
    <scope>NUCLEOTIDE SEQUENCE [LARGE SCALE MRNA] (ISOFORM 1)</scope>
    <source>
        <tissue>Kidney</tissue>
        <tissue>Skin</tissue>
    </source>
</reference>
<reference key="7">
    <citation type="book" date="1988" name="Proceedings of the international symposium on the biology and chemistry of polyamines">
        <editorList>
            <person name="Goldemberg S.H."/>
            <person name="Algranati I.D."/>
        </editorList>
        <authorList>
            <person name="Eloranta T."/>
            <person name="Kajander O."/>
            <person name="Kauppinen L."/>
            <person name="Hyvoenen T."/>
            <person name="Linnala-Kankkunen A."/>
            <person name="Kalkkinen N."/>
            <person name="Kulomaa M."/>
            <person name="Alhonen L."/>
            <person name="Jaenne J."/>
        </authorList>
    </citation>
    <scope>PARTIAL PROTEIN SEQUENCE</scope>
</reference>
<reference key="8">
    <citation type="journal article" date="2003" name="Nat. Biotechnol.">
        <title>Exploring proteomes and analyzing protein processing by mass spectrometric identification of sorted N-terminal peptides.</title>
        <authorList>
            <person name="Gevaert K."/>
            <person name="Goethals M."/>
            <person name="Martens L."/>
            <person name="Van Damme J."/>
            <person name="Staes A."/>
            <person name="Thomas G.R."/>
            <person name="Vandekerckhove J."/>
        </authorList>
    </citation>
    <scope>PROTEIN SEQUENCE OF 97-107 (ISOFORM 1)</scope>
    <source>
        <tissue>Platelet</tissue>
    </source>
</reference>
<reference key="9">
    <citation type="journal article" date="2003" name="Eur. J. Hum. Genet.">
        <title>X-linked spermine synthase gene (SMS) defect: the first polyamine deficiency syndrome.</title>
        <authorList>
            <person name="Cason A.L."/>
            <person name="Ikeguchi Y."/>
            <person name="Skinner C."/>
            <person name="Wood T.C."/>
            <person name="Holden K.R."/>
            <person name="Lubs H.A."/>
            <person name="Martinez F."/>
            <person name="Simensen R.J."/>
            <person name="Stevenson R.E."/>
            <person name="Pegg A.E."/>
            <person name="Schwartz C.E."/>
        </authorList>
    </citation>
    <scope>INVOLVEMENT IN MRXSSR</scope>
</reference>
<reference key="10">
    <citation type="journal article" date="2005" name="Nat. Biotechnol.">
        <title>Immunoaffinity profiling of tyrosine phosphorylation in cancer cells.</title>
        <authorList>
            <person name="Rush J."/>
            <person name="Moritz A."/>
            <person name="Lee K.A."/>
            <person name="Guo A."/>
            <person name="Goss V.L."/>
            <person name="Spek E.J."/>
            <person name="Zhang H."/>
            <person name="Zha X.-M."/>
            <person name="Polakiewicz R.D."/>
            <person name="Comb M.J."/>
        </authorList>
    </citation>
    <scope>IDENTIFICATION BY MASS SPECTROMETRY [LARGE SCALE ANALYSIS]</scope>
</reference>
<reference key="11">
    <citation type="journal article" date="2009" name="Anal. Chem.">
        <title>Lys-N and trypsin cover complementary parts of the phosphoproteome in a refined SCX-based approach.</title>
        <authorList>
            <person name="Gauci S."/>
            <person name="Helbig A.O."/>
            <person name="Slijper M."/>
            <person name="Krijgsveld J."/>
            <person name="Heck A.J."/>
            <person name="Mohammed S."/>
        </authorList>
    </citation>
    <scope>ACETYLATION [LARGE SCALE ANALYSIS] AT ALA-2</scope>
    <scope>CLEAVAGE OF INITIATOR METHIONINE [LARGE SCALE ANALYSIS]</scope>
    <scope>IDENTIFICATION BY MASS SPECTROMETRY [LARGE SCALE ANALYSIS]</scope>
</reference>
<reference key="12">
    <citation type="journal article" date="2011" name="BMC Syst. Biol.">
        <title>Initial characterization of the human central proteome.</title>
        <authorList>
            <person name="Burkard T.R."/>
            <person name="Planyavsky M."/>
            <person name="Kaupe I."/>
            <person name="Breitwieser F.P."/>
            <person name="Buerckstuemmer T."/>
            <person name="Bennett K.L."/>
            <person name="Superti-Furga G."/>
            <person name="Colinge J."/>
        </authorList>
    </citation>
    <scope>IDENTIFICATION BY MASS SPECTROMETRY [LARGE SCALE ANALYSIS]</scope>
</reference>
<reference key="13">
    <citation type="journal article" date="2013" name="J. Proteome Res.">
        <title>Toward a comprehensive characterization of a human cancer cell phosphoproteome.</title>
        <authorList>
            <person name="Zhou H."/>
            <person name="Di Palma S."/>
            <person name="Preisinger C."/>
            <person name="Peng M."/>
            <person name="Polat A.N."/>
            <person name="Heck A.J."/>
            <person name="Mohammed S."/>
        </authorList>
    </citation>
    <scope>PHOSPHORYLATION [LARGE SCALE ANALYSIS] AT SER-57</scope>
    <scope>IDENTIFICATION BY MASS SPECTROMETRY [LARGE SCALE ANALYSIS]</scope>
    <source>
        <tissue>Erythroleukemia</tissue>
    </source>
</reference>
<reference key="14">
    <citation type="journal article" date="2008" name="J. Biol. Chem.">
        <title>Crystal structure of human spermine synthase: implications of substrate binding and catalytic mechanism.</title>
        <authorList>
            <person name="Wu H."/>
            <person name="Min J."/>
            <person name="Zeng H."/>
            <person name="McCloskey D.E."/>
            <person name="Ikeguchi Y."/>
            <person name="Loppnau P."/>
            <person name="Michael A.J."/>
            <person name="Pegg A.E."/>
            <person name="Plotnikov A.N."/>
        </authorList>
    </citation>
    <scope>X-RAY CRYSTALLOGRAPHY (1.95 ANGSTROMS) OF 5-366 (ISOFORM 1) IN COMPLEX WITH SPERMIDINE AND 5-METHYLTHIOADENOSINE</scope>
    <scope>FUNCTION</scope>
    <scope>CATALYTIC ACTIVITY</scope>
    <scope>SUBUNIT</scope>
    <scope>ACTIVE SITE</scope>
    <scope>MUTAGENESIS OF ASP-201; ASP-276 AND GLU-353</scope>
</reference>
<reference key="15">
    <citation type="journal article" date="2008" name="J. Med. Genet.">
        <title>New SMS mutation leads to a striking reduction in spermine synthase protein function and a severe form of Snyder-Robinson X-linked recessive mental retardation syndrome.</title>
        <authorList>
            <person name="de Alencastro G."/>
            <person name="McCloskey D.E."/>
            <person name="Kliemann S.E."/>
            <person name="Maranduba C.M."/>
            <person name="Pegg A.E."/>
            <person name="Wang X."/>
            <person name="Bertola D.R."/>
            <person name="Schwartz C.E."/>
            <person name="Passos-Bueno M.R."/>
            <person name="Sertie A.L."/>
        </authorList>
    </citation>
    <scope>VARIANT MRXSSR SER-56</scope>
    <scope>FUNCTION</scope>
    <scope>INVOLVEMENT IN MRXSSR</scope>
    <scope>CHARACTERIZATION OF VARIANT MRXSSR SER-56</scope>
</reference>
<reference key="16">
    <citation type="journal article" date="2009" name="Am. J. Med. Genet. A">
        <title>A missense mutation, p.V132G, in the X-linked spermine synthase gene (SMS) causes Snyder-Robinson syndrome.</title>
        <authorList>
            <person name="Becerra-Solano L.E."/>
            <person name="Butler J."/>
            <person name="Castaneda-Cisneros G."/>
            <person name="McCloskey D.E."/>
            <person name="Wang X."/>
            <person name="Pegg A.E."/>
            <person name="Schwartz C.E."/>
            <person name="Sanchez-Corona J."/>
            <person name="Garcia-Ortiz J.E."/>
        </authorList>
    </citation>
    <scope>VARIANT MRXSSR GLY-132</scope>
    <scope>INVOLVEMENT IN MRXSSR</scope>
</reference>
<reference key="17">
    <citation type="journal article" date="2012" name="Epilepsia">
        <title>Targeted next generation sequencing as a diagnostic tool in epileptic disorders.</title>
        <authorList>
            <person name="Lemke J.R."/>
            <person name="Riesch E."/>
            <person name="Scheurenbrand T."/>
            <person name="Schubach M."/>
            <person name="Wilhelm C."/>
            <person name="Steiner I."/>
            <person name="Hansen J."/>
            <person name="Courage C."/>
            <person name="Gallati S."/>
            <person name="Buerki S."/>
            <person name="Strozzi S."/>
            <person name="Simonetti B.G."/>
            <person name="Grunt S."/>
            <person name="Steinlin M."/>
            <person name="Alber M."/>
            <person name="Wolff M."/>
            <person name="Klopstock T."/>
            <person name="Prott E.C."/>
            <person name="Lorenz R."/>
            <person name="Spaich C."/>
            <person name="Rona S."/>
            <person name="Lakshminarasimhan M."/>
            <person name="Kroell J."/>
            <person name="Dorn T."/>
            <person name="Kraemer G."/>
            <person name="Synofzik M."/>
            <person name="Becker F."/>
            <person name="Weber Y.G."/>
            <person name="Lerche H."/>
            <person name="Boehm D."/>
            <person name="Biskup S."/>
        </authorList>
    </citation>
    <scope>VARIANT MRXSSR LEU-58</scope>
</reference>
<reference key="18">
    <citation type="journal article" date="2013" name="Am. J. Med. Genet. A">
        <title>Snyder-Robinson syndrome: a novel nonsense mutation in spermine synthase and expansion of the phenotype.</title>
        <authorList>
            <person name="Peron A."/>
            <person name="Spaccini L."/>
            <person name="Norris J."/>
            <person name="Bova S.M."/>
            <person name="Selicorni A."/>
            <person name="Weber G."/>
            <person name="Wood T."/>
            <person name="Schwartz C.E."/>
            <person name="Mastrangelo M."/>
        </authorList>
    </citation>
    <scope>VARIANT MRXSSR GLU-67</scope>
    <scope>FUNCTION</scope>
    <scope>CHARACTERIZATION OF VARIANT MRXSSR GLU-67</scope>
</reference>
<reference key="19">
    <citation type="journal article" date="2014" name="Am. J. Med. Genet. A">
        <authorList>
            <person name="Peron A."/>
            <person name="Spaccini L."/>
            <person name="Norris J."/>
            <person name="Bova S.M."/>
            <person name="Selicorni A."/>
            <person name="Weber G."/>
            <person name="Wood T."/>
            <person name="Schwartz C.E."/>
            <person name="Mastrangelo M."/>
        </authorList>
    </citation>
    <scope>ERRATUM OF PUBMED:23897707</scope>
</reference>
<reference key="20">
    <citation type="journal article" date="2013" name="Hum. Mol. Genet.">
        <title>A Y328C missense mutation in spermine synthase causes a mild form of Snyder-Robinson syndrome.</title>
        <authorList>
            <person name="Zhang Z."/>
            <person name="Norris J."/>
            <person name="Kalscheuer V."/>
            <person name="Wood T."/>
            <person name="Wang L."/>
            <person name="Schwartz C."/>
            <person name="Alexov E."/>
            <person name="Van Esch H."/>
        </authorList>
    </citation>
    <scope>VARIANT MRXSSR CYS-328</scope>
    <scope>FUNCTION</scope>
    <scope>CHARACTERIZATION OF VARIANT MRXSSR CYS-328</scope>
</reference>
<reference key="21">
    <citation type="journal article" date="2014" name="Am. J. Hum. Genet.">
        <title>De novo loss-of-function mutations in SETD5, encoding a methyltransferase in a 3p25 microdeletion syndrome critical region, cause intellectual disability.</title>
        <authorList>
            <consortium name="UK10K Consortium"/>
            <person name="Grozeva D."/>
            <person name="Carss K."/>
            <person name="Spasic-Boskovic O."/>
            <person name="Parker M.J."/>
            <person name="Archer H."/>
            <person name="Firth H.V."/>
            <person name="Park S.M."/>
            <person name="Canham N."/>
            <person name="Holder S.E."/>
            <person name="Wilson M."/>
            <person name="Hackett A."/>
            <person name="Field M."/>
            <person name="Floyd J.A."/>
            <person name="Hurles M."/>
            <person name="Raymond F.L."/>
        </authorList>
    </citation>
    <scope>VARIANT SER-60</scope>
</reference>
<comment type="function">
    <text evidence="3 4 7 8">Catalyzes the production of spermine from spermidine and decarboxylated S-adenosylmethionine (dcSAM).</text>
</comment>
<comment type="catalytic activity">
    <reaction evidence="3">
        <text>S-adenosyl 3-(methylsulfanyl)propylamine + spermidine = spermine + S-methyl-5'-thioadenosine + H(+)</text>
        <dbReference type="Rhea" id="RHEA:19973"/>
        <dbReference type="ChEBI" id="CHEBI:15378"/>
        <dbReference type="ChEBI" id="CHEBI:17509"/>
        <dbReference type="ChEBI" id="CHEBI:45725"/>
        <dbReference type="ChEBI" id="CHEBI:57443"/>
        <dbReference type="ChEBI" id="CHEBI:57834"/>
        <dbReference type="EC" id="2.5.1.22"/>
    </reaction>
    <physiologicalReaction direction="left-to-right" evidence="3">
        <dbReference type="Rhea" id="RHEA:19974"/>
    </physiologicalReaction>
</comment>
<comment type="pathway">
    <text evidence="3">Amine and polyamine biosynthesis; spermine biosynthesis; spermine from spermidine: step 1/1.</text>
</comment>
<comment type="subunit">
    <text evidence="3">Homodimer. Dimerization is mediated through the N-terminal domain and seems to be required for activity as deletion of the N-terminal domain causes complete loss of activity.</text>
</comment>
<comment type="alternative products">
    <event type="alternative splicing"/>
    <isoform>
        <id>P52788-1</id>
        <name>1</name>
        <sequence type="displayed"/>
    </isoform>
    <isoform>
        <id>P52788-2</id>
        <name>2</name>
        <sequence type="described" ref="VSP_034406"/>
    </isoform>
</comment>
<comment type="domain">
    <text evidence="3">Composed of 3 domains: the N-terminal domain has structural similarity to S-adenosylmethionine decarboxylase, the central domain is made up of four beta strands and the C-terminal domain is similar in structure to spermidine synthase. The N- and C-terminal domains are both required for activity.</text>
</comment>
<comment type="disease" evidence="2 4 5 6 7 8">
    <disease id="DI-02315">
        <name>Intellectual developmental disorder, X-linked, syndromic, Snyder-Robinson type</name>
        <acronym>MRXSSR</acronym>
        <description>An X-linked intellectual disability syndrome characterized by a collection of clinical features including facial asymmetry, marfanoid habitus, hypertonia, osteoporosis and unsteady gait.</description>
        <dbReference type="MIM" id="309583"/>
    </disease>
    <text>The disease is caused by variants affecting the gene represented in this entry.</text>
</comment>
<comment type="similarity">
    <text evidence="12">Belongs to the spermidine/spermine synthase family.</text>
</comment>
<feature type="initiator methionine" description="Removed" evidence="14">
    <location>
        <position position="1"/>
    </location>
</feature>
<feature type="chain" id="PRO_0000156538" description="Spermine synthase">
    <location>
        <begin position="2"/>
        <end position="366"/>
    </location>
</feature>
<feature type="domain" description="PABS" evidence="1">
    <location>
        <begin position="122"/>
        <end position="362"/>
    </location>
</feature>
<feature type="active site" description="Proton acceptor" evidence="1 3">
    <location>
        <position position="276"/>
    </location>
</feature>
<feature type="binding site" evidence="3">
    <location>
        <position position="148"/>
    </location>
    <ligand>
        <name>S-adenosyl 3-(methylsulfanyl)propylamine</name>
        <dbReference type="ChEBI" id="CHEBI:57443"/>
    </ligand>
</feature>
<feature type="binding site" evidence="3">
    <location>
        <position position="177"/>
    </location>
    <ligand>
        <name>spermidine</name>
        <dbReference type="ChEBI" id="CHEBI:57834"/>
    </ligand>
</feature>
<feature type="binding site" evidence="3">
    <location>
        <position position="201"/>
    </location>
    <ligand>
        <name>spermidine</name>
        <dbReference type="ChEBI" id="CHEBI:57834"/>
    </ligand>
</feature>
<feature type="binding site" evidence="3">
    <location>
        <position position="220"/>
    </location>
    <ligand>
        <name>S-adenosyl 3-(methylsulfanyl)propylamine</name>
        <dbReference type="ChEBI" id="CHEBI:57443"/>
    </ligand>
</feature>
<feature type="binding site" evidence="3">
    <location>
        <begin position="255"/>
        <end position="256"/>
    </location>
    <ligand>
        <name>S-adenosyl 3-(methylsulfanyl)propylamine</name>
        <dbReference type="ChEBI" id="CHEBI:57443"/>
    </ligand>
</feature>
<feature type="binding site" evidence="3">
    <location>
        <position position="351"/>
    </location>
    <ligand>
        <name>spermidine</name>
        <dbReference type="ChEBI" id="CHEBI:57834"/>
    </ligand>
</feature>
<feature type="binding site" evidence="3">
    <location>
        <position position="353"/>
    </location>
    <ligand>
        <name>spermidine</name>
        <dbReference type="ChEBI" id="CHEBI:57834"/>
    </ligand>
</feature>
<feature type="modified residue" description="N-acetylalanine" evidence="14">
    <location>
        <position position="2"/>
    </location>
</feature>
<feature type="modified residue" description="Phosphoserine" evidence="15">
    <location>
        <position position="57"/>
    </location>
</feature>
<feature type="splice variant" id="VSP_034406" description="In isoform 2." evidence="12">
    <location>
        <begin position="57"/>
        <end position="109"/>
    </location>
</feature>
<feature type="sequence variant" id="VAR_076449" description="In MRXSSR; a reduced spermine/spermidine ratio is observed in patient lymphoblastoid cells consistent with impaired spermine biosynthesis; dbSNP:rs121434610." evidence="4">
    <original>G</original>
    <variation>S</variation>
    <location>
        <position position="56"/>
    </location>
</feature>
<feature type="sequence variant" id="VAR_072748" description="In MRXSSR; dbSNP:rs397515549." evidence="6">
    <original>F</original>
    <variation>L</variation>
    <location>
        <position position="58"/>
    </location>
</feature>
<feature type="sequence variant" id="VAR_071048" description="In dbSNP:rs1394834572." evidence="9">
    <original>N</original>
    <variation>S</variation>
    <location>
        <position position="60"/>
    </location>
</feature>
<feature type="sequence variant" id="VAR_076450" description="In MRXSSR; a reduced spermine/spermidine ratio is observed in patient lymphoblastoid cells consistent with impaired spermine biosynthesis; dbSNP:rs397515550." evidence="8">
    <original>G</original>
    <variation>E</variation>
    <location>
        <position position="67"/>
    </location>
</feature>
<feature type="sequence variant" id="VAR_076451" description="In MRXSSR; dbSNP:rs267607076." evidence="5">
    <original>V</original>
    <variation>G</variation>
    <location>
        <position position="132"/>
    </location>
</feature>
<feature type="sequence variant" id="VAR_076452" description="In MRXSSR; mild disease phenotype; a reduced spermine/spermidine ratio is observed in patient lymphoblastoid cells consistent with impaired spermine biosynthesis; dbSNP:rs397515553." evidence="7">
    <original>Y</original>
    <variation>C</variation>
    <location>
        <position position="328"/>
    </location>
</feature>
<feature type="mutagenesis site" description="100,000-fold decrease in catalytic efficiency." evidence="3">
    <original>D</original>
    <variation>A</variation>
    <variation>N</variation>
    <location>
        <position position="201"/>
    </location>
</feature>
<feature type="mutagenesis site" description="200,000-fold decrease in catalytic efficiency." evidence="3">
    <original>D</original>
    <variation>N</variation>
    <location>
        <position position="276"/>
    </location>
</feature>
<feature type="mutagenesis site" description="800-fold decrease in catalytic efficiency." evidence="3">
    <original>E</original>
    <variation>Q</variation>
    <location>
        <position position="353"/>
    </location>
</feature>
<feature type="sequence conflict" description="In Ref. 1; CAA88921." evidence="12" ref="1">
    <original>M</original>
    <variation>MPG</variation>
    <location>
        <position position="1"/>
    </location>
</feature>
<feature type="strand" evidence="16">
    <location>
        <begin position="5"/>
        <end position="12"/>
    </location>
</feature>
<feature type="helix" evidence="16">
    <location>
        <begin position="21"/>
        <end position="32"/>
    </location>
</feature>
<feature type="strand" evidence="16">
    <location>
        <begin position="36"/>
        <end position="42"/>
    </location>
</feature>
<feature type="turn" evidence="16">
    <location>
        <begin position="43"/>
        <end position="45"/>
    </location>
</feature>
<feature type="strand" evidence="16">
    <location>
        <begin position="46"/>
        <end position="52"/>
    </location>
</feature>
<feature type="strand" evidence="16">
    <location>
        <begin position="58"/>
        <end position="63"/>
    </location>
</feature>
<feature type="strand" evidence="16">
    <location>
        <begin position="67"/>
        <end position="75"/>
    </location>
</feature>
<feature type="helix" evidence="16">
    <location>
        <begin position="85"/>
        <end position="98"/>
    </location>
</feature>
<feature type="strand" evidence="16">
    <location>
        <begin position="114"/>
        <end position="117"/>
    </location>
</feature>
<feature type="strand" evidence="16">
    <location>
        <begin position="136"/>
        <end position="144"/>
    </location>
</feature>
<feature type="strand" evidence="16">
    <location>
        <begin position="149"/>
        <end position="155"/>
    </location>
</feature>
<feature type="turn" evidence="16">
    <location>
        <begin position="156"/>
        <end position="158"/>
    </location>
</feature>
<feature type="strand" evidence="16">
    <location>
        <begin position="159"/>
        <end position="164"/>
    </location>
</feature>
<feature type="strand" evidence="16">
    <location>
        <begin position="167"/>
        <end position="171"/>
    </location>
</feature>
<feature type="helix" evidence="16">
    <location>
        <begin position="175"/>
        <end position="181"/>
    </location>
</feature>
<feature type="turn" evidence="16">
    <location>
        <begin position="182"/>
        <end position="185"/>
    </location>
</feature>
<feature type="strand" evidence="16">
    <location>
        <begin position="193"/>
        <end position="198"/>
    </location>
</feature>
<feature type="helix" evidence="16">
    <location>
        <begin position="203"/>
        <end position="209"/>
    </location>
</feature>
<feature type="strand" evidence="16">
    <location>
        <begin position="214"/>
        <end position="221"/>
    </location>
</feature>
<feature type="helix" evidence="16">
    <location>
        <begin position="223"/>
        <end position="232"/>
    </location>
</feature>
<feature type="helix" evidence="17">
    <location>
        <begin position="234"/>
        <end position="237"/>
    </location>
</feature>
<feature type="strand" evidence="16">
    <location>
        <begin position="242"/>
        <end position="246"/>
    </location>
</feature>
<feature type="strand" evidence="16">
    <location>
        <begin position="249"/>
        <end position="254"/>
    </location>
</feature>
<feature type="helix" evidence="16">
    <location>
        <begin position="256"/>
        <end position="266"/>
    </location>
</feature>
<feature type="strand" evidence="16">
    <location>
        <begin position="270"/>
        <end position="276"/>
    </location>
</feature>
<feature type="helix" evidence="16">
    <location>
        <begin position="291"/>
        <end position="304"/>
    </location>
</feature>
<feature type="strand" evidence="16">
    <location>
        <begin position="306"/>
        <end position="318"/>
    </location>
</feature>
<feature type="helix" evidence="16">
    <location>
        <begin position="322"/>
        <end position="332"/>
    </location>
</feature>
<feature type="strand" evidence="16">
    <location>
        <begin position="335"/>
        <end position="337"/>
    </location>
</feature>
<feature type="strand" evidence="16">
    <location>
        <begin position="339"/>
        <end position="346"/>
    </location>
</feature>
<feature type="helix" evidence="16">
    <location>
        <begin position="349"/>
        <end position="351"/>
    </location>
</feature>
<feature type="strand" evidence="16">
    <location>
        <begin position="355"/>
        <end position="362"/>
    </location>
</feature>
<name>SPSY_HUMAN</name>
<keyword id="KW-0002">3D-structure</keyword>
<keyword id="KW-0007">Acetylation</keyword>
<keyword id="KW-0025">Alternative splicing</keyword>
<keyword id="KW-0903">Direct protein sequencing</keyword>
<keyword id="KW-0991">Intellectual disability</keyword>
<keyword id="KW-0597">Phosphoprotein</keyword>
<keyword id="KW-0620">Polyamine biosynthesis</keyword>
<keyword id="KW-1267">Proteomics identification</keyword>
<keyword id="KW-1185">Reference proteome</keyword>
<keyword id="KW-0808">Transferase</keyword>
<protein>
    <recommendedName>
        <fullName evidence="11">Spermine synthase</fullName>
        <shortName>SPMSY</shortName>
        <ecNumber evidence="3">2.5.1.22</ecNumber>
    </recommendedName>
    <alternativeName>
        <fullName>Spermidine aminopropyltransferase</fullName>
    </alternativeName>
</protein>
<dbReference type="EC" id="2.5.1.22" evidence="3"/>
<dbReference type="EMBL" id="Z49099">
    <property type="protein sequence ID" value="CAA88921.1"/>
    <property type="molecule type" value="mRNA"/>
</dbReference>
<dbReference type="EMBL" id="AD001528">
    <property type="protein sequence ID" value="AAB61308.1"/>
    <property type="molecule type" value="mRNA"/>
</dbReference>
<dbReference type="EMBL" id="AK313834">
    <property type="protein sequence ID" value="BAG36567.1"/>
    <property type="molecule type" value="mRNA"/>
</dbReference>
<dbReference type="EMBL" id="U53331">
    <property type="protein sequence ID" value="AAD08634.1"/>
    <property type="molecule type" value="Genomic_DNA"/>
</dbReference>
<dbReference type="EMBL" id="U73023">
    <property type="status" value="NOT_ANNOTATED_CDS"/>
    <property type="molecule type" value="Genomic_DNA"/>
</dbReference>
<dbReference type="EMBL" id="CH471074">
    <property type="protein sequence ID" value="EAW98984.1"/>
    <property type="molecule type" value="Genomic_DNA"/>
</dbReference>
<dbReference type="EMBL" id="BC009898">
    <property type="protein sequence ID" value="AAH09898.1"/>
    <property type="molecule type" value="mRNA"/>
</dbReference>
<dbReference type="EMBL" id="BC085621">
    <property type="protein sequence ID" value="AAH85621.1"/>
    <property type="molecule type" value="mRNA"/>
</dbReference>
<dbReference type="CCDS" id="CCDS14203.1">
    <molecule id="P52788-1"/>
</dbReference>
<dbReference type="CCDS" id="CCDS59161.1">
    <molecule id="P52788-2"/>
</dbReference>
<dbReference type="PIR" id="S54160">
    <property type="entry name" value="S54160"/>
</dbReference>
<dbReference type="RefSeq" id="NP_001245352.1">
    <molecule id="P52788-2"/>
    <property type="nucleotide sequence ID" value="NM_001258423.2"/>
</dbReference>
<dbReference type="RefSeq" id="NP_004586.2">
    <molecule id="P52788-1"/>
    <property type="nucleotide sequence ID" value="NM_004595.4"/>
</dbReference>
<dbReference type="PDB" id="3C6K">
    <property type="method" value="X-ray"/>
    <property type="resolution" value="1.95 A"/>
    <property type="chains" value="A/B/C/D=5-366"/>
</dbReference>
<dbReference type="PDB" id="3C6M">
    <property type="method" value="X-ray"/>
    <property type="resolution" value="2.45 A"/>
    <property type="chains" value="A/B/C/D=5-366"/>
</dbReference>
<dbReference type="PDBsum" id="3C6K"/>
<dbReference type="PDBsum" id="3C6M"/>
<dbReference type="SMR" id="P52788"/>
<dbReference type="BioGRID" id="112495">
    <property type="interactions" value="122"/>
</dbReference>
<dbReference type="FunCoup" id="P52788">
    <property type="interactions" value="858"/>
</dbReference>
<dbReference type="IntAct" id="P52788">
    <property type="interactions" value="25"/>
</dbReference>
<dbReference type="MINT" id="P52788"/>
<dbReference type="STRING" id="9606.ENSP00000385746"/>
<dbReference type="BindingDB" id="P52788"/>
<dbReference type="ChEMBL" id="CHEMBL4934"/>
<dbReference type="DrugBank" id="DB00127">
    <property type="generic name" value="Spermine"/>
</dbReference>
<dbReference type="GlyGen" id="P52788">
    <property type="glycosylation" value="1 site, 1 O-linked glycan (1 site)"/>
</dbReference>
<dbReference type="iPTMnet" id="P52788"/>
<dbReference type="MetOSite" id="P52788"/>
<dbReference type="PhosphoSitePlus" id="P52788"/>
<dbReference type="SwissPalm" id="P52788"/>
<dbReference type="BioMuta" id="SMS"/>
<dbReference type="DMDM" id="8247960"/>
<dbReference type="OGP" id="P52788"/>
<dbReference type="jPOST" id="P52788"/>
<dbReference type="MassIVE" id="P52788"/>
<dbReference type="PaxDb" id="9606-ENSP00000385746"/>
<dbReference type="PeptideAtlas" id="P52788"/>
<dbReference type="ProteomicsDB" id="56531">
    <molecule id="P52788-1"/>
</dbReference>
<dbReference type="ProteomicsDB" id="56532">
    <molecule id="P52788-2"/>
</dbReference>
<dbReference type="Pumba" id="P52788"/>
<dbReference type="Antibodypedia" id="24466">
    <property type="antibodies" value="402 antibodies from 28 providers"/>
</dbReference>
<dbReference type="DNASU" id="6611"/>
<dbReference type="Ensembl" id="ENST00000379404.5">
    <molecule id="P52788-2"/>
    <property type="protein sequence ID" value="ENSP00000368714.1"/>
    <property type="gene ID" value="ENSG00000102172.16"/>
</dbReference>
<dbReference type="Ensembl" id="ENST00000404933.7">
    <molecule id="P52788-1"/>
    <property type="protein sequence ID" value="ENSP00000385746.2"/>
    <property type="gene ID" value="ENSG00000102172.16"/>
</dbReference>
<dbReference type="GeneID" id="6611"/>
<dbReference type="KEGG" id="hsa:6611"/>
<dbReference type="MANE-Select" id="ENST00000404933.7">
    <property type="protein sequence ID" value="ENSP00000385746.2"/>
    <property type="RefSeq nucleotide sequence ID" value="NM_004595.5"/>
    <property type="RefSeq protein sequence ID" value="NP_004586.2"/>
</dbReference>
<dbReference type="UCSC" id="uc004dag.5">
    <molecule id="P52788-1"/>
    <property type="organism name" value="human"/>
</dbReference>
<dbReference type="AGR" id="HGNC:11123"/>
<dbReference type="CTD" id="6611"/>
<dbReference type="DisGeNET" id="6611"/>
<dbReference type="GeneCards" id="SMS"/>
<dbReference type="GeneReviews" id="SMS"/>
<dbReference type="HGNC" id="HGNC:11123">
    <property type="gene designation" value="SMS"/>
</dbReference>
<dbReference type="HPA" id="ENSG00000102172">
    <property type="expression patterns" value="Low tissue specificity"/>
</dbReference>
<dbReference type="MalaCards" id="SMS"/>
<dbReference type="MIM" id="300105">
    <property type="type" value="gene"/>
</dbReference>
<dbReference type="MIM" id="309583">
    <property type="type" value="phenotype"/>
</dbReference>
<dbReference type="neXtProt" id="NX_P52788"/>
<dbReference type="OpenTargets" id="ENSG00000102172"/>
<dbReference type="Orphanet" id="3063">
    <property type="disease" value="X-linked intellectual disability, Snyder type"/>
</dbReference>
<dbReference type="PharmGKB" id="PA35972"/>
<dbReference type="VEuPathDB" id="HostDB:ENSG00000102172"/>
<dbReference type="eggNOG" id="KOG1562">
    <property type="taxonomic scope" value="Eukaryota"/>
</dbReference>
<dbReference type="GeneTree" id="ENSGT00870000136506"/>
<dbReference type="HOGENOM" id="CLU_048650_1_0_1"/>
<dbReference type="InParanoid" id="P52788"/>
<dbReference type="OMA" id="PDGKEPI"/>
<dbReference type="OrthoDB" id="5953636at2759"/>
<dbReference type="PAN-GO" id="P52788">
    <property type="GO annotations" value="2 GO annotations based on evolutionary models"/>
</dbReference>
<dbReference type="PhylomeDB" id="P52788"/>
<dbReference type="TreeFam" id="TF324508"/>
<dbReference type="BioCyc" id="MetaCyc:HS02362-MONOMER"/>
<dbReference type="BRENDA" id="2.5.1.22">
    <property type="organism ID" value="2681"/>
</dbReference>
<dbReference type="PathwayCommons" id="P52788"/>
<dbReference type="Reactome" id="R-HSA-351202">
    <property type="pathway name" value="Metabolism of polyamines"/>
</dbReference>
<dbReference type="SABIO-RK" id="P52788"/>
<dbReference type="SignaLink" id="P52788"/>
<dbReference type="UniPathway" id="UPA00249">
    <property type="reaction ID" value="UER00315"/>
</dbReference>
<dbReference type="BioGRID-ORCS" id="6611">
    <property type="hits" value="202 hits in 784 CRISPR screens"/>
</dbReference>
<dbReference type="ChiTaRS" id="SMS">
    <property type="organism name" value="human"/>
</dbReference>
<dbReference type="EvolutionaryTrace" id="P52788"/>
<dbReference type="GeneWiki" id="SMS_(gene)"/>
<dbReference type="GenomeRNAi" id="6611"/>
<dbReference type="Pharos" id="P52788">
    <property type="development level" value="Tchem"/>
</dbReference>
<dbReference type="PRO" id="PR:P52788"/>
<dbReference type="Proteomes" id="UP000005640">
    <property type="component" value="Chromosome X"/>
</dbReference>
<dbReference type="RNAct" id="P52788">
    <property type="molecule type" value="protein"/>
</dbReference>
<dbReference type="Bgee" id="ENSG00000102172">
    <property type="expression patterns" value="Expressed in cortical plate and 100 other cell types or tissues"/>
</dbReference>
<dbReference type="ExpressionAtlas" id="P52788">
    <property type="expression patterns" value="baseline and differential"/>
</dbReference>
<dbReference type="GO" id="GO:0005829">
    <property type="term" value="C:cytosol"/>
    <property type="evidence" value="ECO:0000304"/>
    <property type="project" value="Reactome"/>
</dbReference>
<dbReference type="GO" id="GO:0070062">
    <property type="term" value="C:extracellular exosome"/>
    <property type="evidence" value="ECO:0007005"/>
    <property type="project" value="UniProtKB"/>
</dbReference>
<dbReference type="GO" id="GO:0016768">
    <property type="term" value="F:spermine synthase activity"/>
    <property type="evidence" value="ECO:0000318"/>
    <property type="project" value="GO_Central"/>
</dbReference>
<dbReference type="GO" id="GO:0006555">
    <property type="term" value="P:methionine metabolic process"/>
    <property type="evidence" value="ECO:0000304"/>
    <property type="project" value="ProtInc"/>
</dbReference>
<dbReference type="GO" id="GO:0006595">
    <property type="term" value="P:polyamine metabolic process"/>
    <property type="evidence" value="ECO:0000304"/>
    <property type="project" value="Reactome"/>
</dbReference>
<dbReference type="GO" id="GO:0006597">
    <property type="term" value="P:spermine biosynthetic process"/>
    <property type="evidence" value="ECO:0000318"/>
    <property type="project" value="GO_Central"/>
</dbReference>
<dbReference type="CDD" id="cd02440">
    <property type="entry name" value="AdoMet_MTases"/>
    <property type="match status" value="1"/>
</dbReference>
<dbReference type="FunFam" id="2.30.140.10:FF:000005">
    <property type="entry name" value="Spermine synthase"/>
    <property type="match status" value="1"/>
</dbReference>
<dbReference type="FunFam" id="3.30.160.110:FF:000002">
    <property type="entry name" value="spermine synthase"/>
    <property type="match status" value="1"/>
</dbReference>
<dbReference type="FunFam" id="3.40.50.150:FF:000059">
    <property type="entry name" value="spermine synthase"/>
    <property type="match status" value="1"/>
</dbReference>
<dbReference type="Gene3D" id="3.30.160.110">
    <property type="entry name" value="Siroheme synthase, domain 2"/>
    <property type="match status" value="1"/>
</dbReference>
<dbReference type="Gene3D" id="2.30.140.10">
    <property type="entry name" value="Spermidine synthase, tetramerisation domain"/>
    <property type="match status" value="1"/>
</dbReference>
<dbReference type="Gene3D" id="3.40.50.150">
    <property type="entry name" value="Vaccinia Virus protein VP39"/>
    <property type="match status" value="1"/>
</dbReference>
<dbReference type="InterPro" id="IPR030374">
    <property type="entry name" value="PABS"/>
</dbReference>
<dbReference type="InterPro" id="IPR030373">
    <property type="entry name" value="PABS_CS"/>
</dbReference>
<dbReference type="InterPro" id="IPR029063">
    <property type="entry name" value="SAM-dependent_MTases_sf"/>
</dbReference>
<dbReference type="InterPro" id="IPR035246">
    <property type="entry name" value="Spermidine_synt_N"/>
</dbReference>
<dbReference type="InterPro" id="IPR037163">
    <property type="entry name" value="Spermidine_synt_N_sf"/>
</dbReference>
<dbReference type="InterPro" id="IPR015576">
    <property type="entry name" value="Spermine_synthase_animal"/>
</dbReference>
<dbReference type="InterPro" id="IPR040900">
    <property type="entry name" value="SpmSyn_N"/>
</dbReference>
<dbReference type="PANTHER" id="PTHR46315">
    <property type="entry name" value="SPERMINE SYNTHASE"/>
    <property type="match status" value="1"/>
</dbReference>
<dbReference type="PANTHER" id="PTHR46315:SF1">
    <property type="entry name" value="SPERMINE SYNTHASE"/>
    <property type="match status" value="1"/>
</dbReference>
<dbReference type="Pfam" id="PF17284">
    <property type="entry name" value="Spermine_synt_N"/>
    <property type="match status" value="1"/>
</dbReference>
<dbReference type="Pfam" id="PF01564">
    <property type="entry name" value="Spermine_synth"/>
    <property type="match status" value="1"/>
</dbReference>
<dbReference type="Pfam" id="PF17950">
    <property type="entry name" value="SpmSyn_N"/>
    <property type="match status" value="1"/>
</dbReference>
<dbReference type="SUPFAM" id="SSF53335">
    <property type="entry name" value="S-adenosyl-L-methionine-dependent methyltransferases"/>
    <property type="match status" value="1"/>
</dbReference>
<dbReference type="PROSITE" id="PS01330">
    <property type="entry name" value="PABS_1"/>
    <property type="match status" value="1"/>
</dbReference>
<dbReference type="PROSITE" id="PS51006">
    <property type="entry name" value="PABS_2"/>
    <property type="match status" value="1"/>
</dbReference>